<name>PDXT_THEGJ</name>
<evidence type="ECO:0000255" key="1">
    <source>
        <dbReference type="HAMAP-Rule" id="MF_01615"/>
    </source>
</evidence>
<feature type="chain" id="PRO_1000215727" description="Pyridoxal 5'-phosphate synthase subunit PdxT">
    <location>
        <begin position="1"/>
        <end position="197"/>
    </location>
</feature>
<feature type="active site" description="Nucleophile" evidence="1">
    <location>
        <position position="85"/>
    </location>
</feature>
<feature type="active site" description="Charge relay system" evidence="1">
    <location>
        <position position="179"/>
    </location>
</feature>
<feature type="active site" description="Charge relay system" evidence="1">
    <location>
        <position position="181"/>
    </location>
</feature>
<feature type="binding site" evidence="1">
    <location>
        <begin position="53"/>
        <end position="55"/>
    </location>
    <ligand>
        <name>L-glutamine</name>
        <dbReference type="ChEBI" id="CHEBI:58359"/>
    </ligand>
</feature>
<feature type="binding site" evidence="1">
    <location>
        <position position="114"/>
    </location>
    <ligand>
        <name>L-glutamine</name>
        <dbReference type="ChEBI" id="CHEBI:58359"/>
    </ligand>
</feature>
<feature type="binding site" evidence="1">
    <location>
        <begin position="142"/>
        <end position="143"/>
    </location>
    <ligand>
        <name>L-glutamine</name>
        <dbReference type="ChEBI" id="CHEBI:58359"/>
    </ligand>
</feature>
<reference key="1">
    <citation type="journal article" date="2007" name="Genome Biol.">
        <title>Genome analysis and genome-wide proteomics of Thermococcus gammatolerans, the most radioresistant organism known amongst the Archaea.</title>
        <authorList>
            <person name="Zivanovic Y."/>
            <person name="Armengaud J."/>
            <person name="Lagorce A."/>
            <person name="Leplat C."/>
            <person name="Guerin P."/>
            <person name="Dutertre M."/>
            <person name="Anthouard V."/>
            <person name="Forterre P."/>
            <person name="Wincker P."/>
            <person name="Confalonieri F."/>
        </authorList>
    </citation>
    <scope>NUCLEOTIDE SEQUENCE [LARGE SCALE GENOMIC DNA]</scope>
    <source>
        <strain>DSM 15229 / JCM 11827 / EJ3</strain>
    </source>
</reference>
<comment type="function">
    <text evidence="1">Catalyzes the hydrolysis of glutamine to glutamate and ammonia as part of the biosynthesis of pyridoxal 5'-phosphate. The resulting ammonia molecule is channeled to the active site of PdxS.</text>
</comment>
<comment type="catalytic activity">
    <reaction evidence="1">
        <text>aldehydo-D-ribose 5-phosphate + D-glyceraldehyde 3-phosphate + L-glutamine = pyridoxal 5'-phosphate + L-glutamate + phosphate + 3 H2O + H(+)</text>
        <dbReference type="Rhea" id="RHEA:31507"/>
        <dbReference type="ChEBI" id="CHEBI:15377"/>
        <dbReference type="ChEBI" id="CHEBI:15378"/>
        <dbReference type="ChEBI" id="CHEBI:29985"/>
        <dbReference type="ChEBI" id="CHEBI:43474"/>
        <dbReference type="ChEBI" id="CHEBI:58273"/>
        <dbReference type="ChEBI" id="CHEBI:58359"/>
        <dbReference type="ChEBI" id="CHEBI:59776"/>
        <dbReference type="ChEBI" id="CHEBI:597326"/>
        <dbReference type="EC" id="4.3.3.6"/>
    </reaction>
</comment>
<comment type="catalytic activity">
    <reaction evidence="1">
        <text>L-glutamine + H2O = L-glutamate + NH4(+)</text>
        <dbReference type="Rhea" id="RHEA:15889"/>
        <dbReference type="ChEBI" id="CHEBI:15377"/>
        <dbReference type="ChEBI" id="CHEBI:28938"/>
        <dbReference type="ChEBI" id="CHEBI:29985"/>
        <dbReference type="ChEBI" id="CHEBI:58359"/>
        <dbReference type="EC" id="3.5.1.2"/>
    </reaction>
</comment>
<comment type="pathway">
    <text evidence="1">Cofactor biosynthesis; pyridoxal 5'-phosphate biosynthesis.</text>
</comment>
<comment type="subunit">
    <text evidence="1">In the presence of PdxS, forms a dodecamer of heterodimers. Only shows activity in the heterodimer.</text>
</comment>
<comment type="similarity">
    <text evidence="1">Belongs to the glutaminase PdxT/SNO family.</text>
</comment>
<accession>C5A4H0</accession>
<protein>
    <recommendedName>
        <fullName evidence="1">Pyridoxal 5'-phosphate synthase subunit PdxT</fullName>
        <ecNumber evidence="1">4.3.3.6</ecNumber>
    </recommendedName>
    <alternativeName>
        <fullName evidence="1">Pdx2</fullName>
    </alternativeName>
    <alternativeName>
        <fullName evidence="1">Pyridoxal 5'-phosphate synthase glutaminase subunit</fullName>
        <ecNumber evidence="1">3.5.1.2</ecNumber>
    </alternativeName>
</protein>
<proteinExistence type="inferred from homology"/>
<keyword id="KW-0315">Glutamine amidotransferase</keyword>
<keyword id="KW-0378">Hydrolase</keyword>
<keyword id="KW-0456">Lyase</keyword>
<keyword id="KW-0663">Pyridoxal phosphate</keyword>
<keyword id="KW-1185">Reference proteome</keyword>
<gene>
    <name evidence="1" type="primary">pdxT</name>
    <name type="ordered locus">TGAM_0630</name>
</gene>
<organism>
    <name type="scientific">Thermococcus gammatolerans (strain DSM 15229 / JCM 11827 / EJ3)</name>
    <dbReference type="NCBI Taxonomy" id="593117"/>
    <lineage>
        <taxon>Archaea</taxon>
        <taxon>Methanobacteriati</taxon>
        <taxon>Methanobacteriota</taxon>
        <taxon>Thermococci</taxon>
        <taxon>Thermococcales</taxon>
        <taxon>Thermococcaceae</taxon>
        <taxon>Thermococcus</taxon>
    </lineage>
</organism>
<sequence length="197" mass="21706">MVKVGVIGLQGDVSEHIEAAQRALENLGVSGEVIWLKKPEQLEGISAIIIPGGESTTISRLMQKNGLLEPVRKLGEEGLPIMGTCAGLIMLSKEVIGATPEQRFLELLDVKVNRNAYGRQVDSFEAPVKLAFSDEPFPGVFIRAPRIVELLSDKVKPIAWLGDRVVGVEQDNLIGLEFHPELTEDTRVHEYFLRKAL</sequence>
<dbReference type="EC" id="4.3.3.6" evidence="1"/>
<dbReference type="EC" id="3.5.1.2" evidence="1"/>
<dbReference type="EMBL" id="CP001398">
    <property type="protein sequence ID" value="ACS33132.1"/>
    <property type="molecule type" value="Genomic_DNA"/>
</dbReference>
<dbReference type="RefSeq" id="WP_015858250.1">
    <property type="nucleotide sequence ID" value="NC_012804.1"/>
</dbReference>
<dbReference type="SMR" id="C5A4H0"/>
<dbReference type="STRING" id="593117.TGAM_0630"/>
<dbReference type="MEROPS" id="C26.A32"/>
<dbReference type="PaxDb" id="593117-TGAM_0630"/>
<dbReference type="GeneID" id="7987253"/>
<dbReference type="KEGG" id="tga:TGAM_0630"/>
<dbReference type="PATRIC" id="fig|593117.10.peg.628"/>
<dbReference type="eggNOG" id="arCOG00034">
    <property type="taxonomic scope" value="Archaea"/>
</dbReference>
<dbReference type="HOGENOM" id="CLU_069674_2_0_2"/>
<dbReference type="OrthoDB" id="26717at2157"/>
<dbReference type="UniPathway" id="UPA00245"/>
<dbReference type="Proteomes" id="UP000001488">
    <property type="component" value="Chromosome"/>
</dbReference>
<dbReference type="GO" id="GO:0005829">
    <property type="term" value="C:cytosol"/>
    <property type="evidence" value="ECO:0007669"/>
    <property type="project" value="TreeGrafter"/>
</dbReference>
<dbReference type="GO" id="GO:1903600">
    <property type="term" value="C:glutaminase complex"/>
    <property type="evidence" value="ECO:0007669"/>
    <property type="project" value="TreeGrafter"/>
</dbReference>
<dbReference type="GO" id="GO:0004359">
    <property type="term" value="F:glutaminase activity"/>
    <property type="evidence" value="ECO:0007669"/>
    <property type="project" value="UniProtKB-UniRule"/>
</dbReference>
<dbReference type="GO" id="GO:0036381">
    <property type="term" value="F:pyridoxal 5'-phosphate synthase (glutamine hydrolysing) activity"/>
    <property type="evidence" value="ECO:0007669"/>
    <property type="project" value="UniProtKB-UniRule"/>
</dbReference>
<dbReference type="GO" id="GO:0006543">
    <property type="term" value="P:glutamine catabolic process"/>
    <property type="evidence" value="ECO:0007669"/>
    <property type="project" value="UniProtKB-UniRule"/>
</dbReference>
<dbReference type="GO" id="GO:0042823">
    <property type="term" value="P:pyridoxal phosphate biosynthetic process"/>
    <property type="evidence" value="ECO:0007669"/>
    <property type="project" value="UniProtKB-UniRule"/>
</dbReference>
<dbReference type="GO" id="GO:0008614">
    <property type="term" value="P:pyridoxine metabolic process"/>
    <property type="evidence" value="ECO:0007669"/>
    <property type="project" value="TreeGrafter"/>
</dbReference>
<dbReference type="CDD" id="cd01749">
    <property type="entry name" value="GATase1_PB"/>
    <property type="match status" value="1"/>
</dbReference>
<dbReference type="FunFam" id="3.40.50.880:FF:000041">
    <property type="entry name" value="Glutamine amidotransferase subunit pdxT, putative"/>
    <property type="match status" value="1"/>
</dbReference>
<dbReference type="Gene3D" id="3.40.50.880">
    <property type="match status" value="1"/>
</dbReference>
<dbReference type="HAMAP" id="MF_01615">
    <property type="entry name" value="PdxT"/>
    <property type="match status" value="1"/>
</dbReference>
<dbReference type="InterPro" id="IPR029062">
    <property type="entry name" value="Class_I_gatase-like"/>
</dbReference>
<dbReference type="InterPro" id="IPR002161">
    <property type="entry name" value="PdxT/SNO"/>
</dbReference>
<dbReference type="InterPro" id="IPR021196">
    <property type="entry name" value="PdxT/SNO_CS"/>
</dbReference>
<dbReference type="NCBIfam" id="TIGR03800">
    <property type="entry name" value="PLP_synth_Pdx2"/>
    <property type="match status" value="1"/>
</dbReference>
<dbReference type="PANTHER" id="PTHR31559">
    <property type="entry name" value="PYRIDOXAL 5'-PHOSPHATE SYNTHASE SUBUNIT SNO"/>
    <property type="match status" value="1"/>
</dbReference>
<dbReference type="PANTHER" id="PTHR31559:SF0">
    <property type="entry name" value="PYRIDOXAL 5'-PHOSPHATE SYNTHASE SUBUNIT SNO1-RELATED"/>
    <property type="match status" value="1"/>
</dbReference>
<dbReference type="Pfam" id="PF01174">
    <property type="entry name" value="SNO"/>
    <property type="match status" value="1"/>
</dbReference>
<dbReference type="PIRSF" id="PIRSF005639">
    <property type="entry name" value="Glut_amidoT_SNO"/>
    <property type="match status" value="1"/>
</dbReference>
<dbReference type="SUPFAM" id="SSF52317">
    <property type="entry name" value="Class I glutamine amidotransferase-like"/>
    <property type="match status" value="1"/>
</dbReference>
<dbReference type="PROSITE" id="PS01236">
    <property type="entry name" value="PDXT_SNO_1"/>
    <property type="match status" value="1"/>
</dbReference>
<dbReference type="PROSITE" id="PS51130">
    <property type="entry name" value="PDXT_SNO_2"/>
    <property type="match status" value="1"/>
</dbReference>